<protein>
    <recommendedName>
        <fullName evidence="1">Glutamyl-tRNA reductase</fullName>
        <shortName evidence="1">GluTR</shortName>
        <ecNumber evidence="1">1.2.1.70</ecNumber>
    </recommendedName>
</protein>
<dbReference type="EC" id="1.2.1.70" evidence="1"/>
<dbReference type="EMBL" id="CP000046">
    <property type="protein sequence ID" value="AAW36824.1"/>
    <property type="molecule type" value="Genomic_DNA"/>
</dbReference>
<dbReference type="RefSeq" id="WP_000545451.1">
    <property type="nucleotide sequence ID" value="NZ_JBGOFO010000003.1"/>
</dbReference>
<dbReference type="SMR" id="Q5HFA0"/>
<dbReference type="KEGG" id="sac:SACOL1719"/>
<dbReference type="HOGENOM" id="CLU_035113_2_2_9"/>
<dbReference type="UniPathway" id="UPA00251">
    <property type="reaction ID" value="UER00316"/>
</dbReference>
<dbReference type="Proteomes" id="UP000000530">
    <property type="component" value="Chromosome"/>
</dbReference>
<dbReference type="GO" id="GO:0008883">
    <property type="term" value="F:glutamyl-tRNA reductase activity"/>
    <property type="evidence" value="ECO:0007669"/>
    <property type="project" value="UniProtKB-UniRule"/>
</dbReference>
<dbReference type="GO" id="GO:0050661">
    <property type="term" value="F:NADP binding"/>
    <property type="evidence" value="ECO:0007669"/>
    <property type="project" value="InterPro"/>
</dbReference>
<dbReference type="GO" id="GO:0006782">
    <property type="term" value="P:protoporphyrinogen IX biosynthetic process"/>
    <property type="evidence" value="ECO:0007669"/>
    <property type="project" value="UniProtKB-UniRule"/>
</dbReference>
<dbReference type="CDD" id="cd05213">
    <property type="entry name" value="NAD_bind_Glutamyl_tRNA_reduct"/>
    <property type="match status" value="1"/>
</dbReference>
<dbReference type="FunFam" id="3.30.460.30:FF:000001">
    <property type="entry name" value="Glutamyl-tRNA reductase"/>
    <property type="match status" value="1"/>
</dbReference>
<dbReference type="FunFam" id="3.40.50.720:FF:000031">
    <property type="entry name" value="Glutamyl-tRNA reductase"/>
    <property type="match status" value="1"/>
</dbReference>
<dbReference type="Gene3D" id="3.30.460.30">
    <property type="entry name" value="Glutamyl-tRNA reductase, N-terminal domain"/>
    <property type="match status" value="1"/>
</dbReference>
<dbReference type="Gene3D" id="3.40.50.720">
    <property type="entry name" value="NAD(P)-binding Rossmann-like Domain"/>
    <property type="match status" value="1"/>
</dbReference>
<dbReference type="HAMAP" id="MF_00087">
    <property type="entry name" value="Glu_tRNA_reductase"/>
    <property type="match status" value="1"/>
</dbReference>
<dbReference type="InterPro" id="IPR000343">
    <property type="entry name" value="4pyrrol_synth_GluRdtase"/>
</dbReference>
<dbReference type="InterPro" id="IPR015896">
    <property type="entry name" value="4pyrrol_synth_GluRdtase_dimer"/>
</dbReference>
<dbReference type="InterPro" id="IPR015895">
    <property type="entry name" value="4pyrrol_synth_GluRdtase_N"/>
</dbReference>
<dbReference type="InterPro" id="IPR018214">
    <property type="entry name" value="GluRdtase_CS"/>
</dbReference>
<dbReference type="InterPro" id="IPR036453">
    <property type="entry name" value="GluRdtase_dimer_dom_sf"/>
</dbReference>
<dbReference type="InterPro" id="IPR036343">
    <property type="entry name" value="GluRdtase_N_sf"/>
</dbReference>
<dbReference type="InterPro" id="IPR036291">
    <property type="entry name" value="NAD(P)-bd_dom_sf"/>
</dbReference>
<dbReference type="InterPro" id="IPR006151">
    <property type="entry name" value="Shikm_DH/Glu-tRNA_Rdtase"/>
</dbReference>
<dbReference type="NCBIfam" id="TIGR01035">
    <property type="entry name" value="hemA"/>
    <property type="match status" value="1"/>
</dbReference>
<dbReference type="PANTHER" id="PTHR43120">
    <property type="entry name" value="GLUTAMYL-TRNA REDUCTASE 1, CHLOROPLASTIC"/>
    <property type="match status" value="1"/>
</dbReference>
<dbReference type="PANTHER" id="PTHR43120:SF1">
    <property type="entry name" value="GLUTAMYL-TRNA REDUCTASE 1, CHLOROPLASTIC"/>
    <property type="match status" value="1"/>
</dbReference>
<dbReference type="Pfam" id="PF00745">
    <property type="entry name" value="GlutR_dimer"/>
    <property type="match status" value="1"/>
</dbReference>
<dbReference type="Pfam" id="PF05201">
    <property type="entry name" value="GlutR_N"/>
    <property type="match status" value="1"/>
</dbReference>
<dbReference type="Pfam" id="PF01488">
    <property type="entry name" value="Shikimate_DH"/>
    <property type="match status" value="1"/>
</dbReference>
<dbReference type="PIRSF" id="PIRSF000445">
    <property type="entry name" value="4pyrrol_synth_GluRdtase"/>
    <property type="match status" value="1"/>
</dbReference>
<dbReference type="SUPFAM" id="SSF69742">
    <property type="entry name" value="Glutamyl tRNA-reductase catalytic, N-terminal domain"/>
    <property type="match status" value="1"/>
</dbReference>
<dbReference type="SUPFAM" id="SSF69075">
    <property type="entry name" value="Glutamyl tRNA-reductase dimerization domain"/>
    <property type="match status" value="1"/>
</dbReference>
<dbReference type="SUPFAM" id="SSF51735">
    <property type="entry name" value="NAD(P)-binding Rossmann-fold domains"/>
    <property type="match status" value="1"/>
</dbReference>
<dbReference type="PROSITE" id="PS00747">
    <property type="entry name" value="GLUTR"/>
    <property type="match status" value="1"/>
</dbReference>
<comment type="function">
    <text evidence="1">Catalyzes the NADPH-dependent reduction of glutamyl-tRNA(Glu) to glutamate 1-semialdehyde (GSA).</text>
</comment>
<comment type="catalytic activity">
    <reaction evidence="1">
        <text>(S)-4-amino-5-oxopentanoate + tRNA(Glu) + NADP(+) = L-glutamyl-tRNA(Glu) + NADPH + H(+)</text>
        <dbReference type="Rhea" id="RHEA:12344"/>
        <dbReference type="Rhea" id="RHEA-COMP:9663"/>
        <dbReference type="Rhea" id="RHEA-COMP:9680"/>
        <dbReference type="ChEBI" id="CHEBI:15378"/>
        <dbReference type="ChEBI" id="CHEBI:57501"/>
        <dbReference type="ChEBI" id="CHEBI:57783"/>
        <dbReference type="ChEBI" id="CHEBI:58349"/>
        <dbReference type="ChEBI" id="CHEBI:78442"/>
        <dbReference type="ChEBI" id="CHEBI:78520"/>
        <dbReference type="EC" id="1.2.1.70"/>
    </reaction>
</comment>
<comment type="pathway">
    <text evidence="1">Porphyrin-containing compound metabolism; protoporphyrin-IX biosynthesis; 5-aminolevulinate from L-glutamyl-tRNA(Glu): step 1/2.</text>
</comment>
<comment type="subunit">
    <text evidence="1">Homodimer.</text>
</comment>
<comment type="domain">
    <text evidence="1">Possesses an unusual extended V-shaped dimeric structure with each monomer consisting of three distinct domains arranged along a curved 'spinal' alpha-helix. The N-terminal catalytic domain specifically recognizes the glutamate moiety of the substrate. The second domain is the NADPH-binding domain, and the third C-terminal domain is responsible for dimerization.</text>
</comment>
<comment type="miscellaneous">
    <text evidence="1">During catalysis, the active site Cys acts as a nucleophile attacking the alpha-carbonyl group of tRNA-bound glutamate with the formation of a thioester intermediate between enzyme and glutamate, and the concomitant release of tRNA(Glu). The thioester intermediate is finally reduced by direct hydride transfer from NADPH, to form the product GSA.</text>
</comment>
<comment type="similarity">
    <text evidence="1">Belongs to the glutamyl-tRNA reductase family.</text>
</comment>
<proteinExistence type="inferred from homology"/>
<organism>
    <name type="scientific">Staphylococcus aureus (strain COL)</name>
    <dbReference type="NCBI Taxonomy" id="93062"/>
    <lineage>
        <taxon>Bacteria</taxon>
        <taxon>Bacillati</taxon>
        <taxon>Bacillota</taxon>
        <taxon>Bacilli</taxon>
        <taxon>Bacillales</taxon>
        <taxon>Staphylococcaceae</taxon>
        <taxon>Staphylococcus</taxon>
    </lineage>
</organism>
<accession>Q5HFA0</accession>
<sequence>MHFIAISINHRTADVALREQVAFRDDALRIAHEDLYETKSILENVILSTCNRTEVYAVVDQIHTGRYYIQRFLARAFGFEVDDIKAMSEVKVGDEAVEHLLRVTSGLDSIVLGETQILGQIRDAFFLAQSTGTTGTIFNHLFKQAITFAKRAHNETDIADNAVSVSYAAVELAKKVFGKLKSKQAIIIGAGEMSELSLLNLLGSGITDITVVNRTIENAMKLAAKHQVKYDELSSLPNLLESADIVISSTSAQSYIITNEMIERIAENRKQDSLVLIDIAVPRDIEPGISAITNIFNYDVDDLKGLVDANLRERQLAAATISEQIPAEIHAHNEWISMLGVVPVIRALREKAMAIQAETMDSIDRKLPGLSERERKIISKHTKSIINQMLKDPIKQAKELSSDKKSNEKLELFQNIFDIEAECPHEQAKQQKESKVKEISARRIFSFE</sequence>
<feature type="chain" id="PRO_0000114067" description="Glutamyl-tRNA reductase">
    <location>
        <begin position="1"/>
        <end position="448"/>
    </location>
</feature>
<feature type="active site" description="Nucleophile" evidence="1">
    <location>
        <position position="50"/>
    </location>
</feature>
<feature type="binding site" evidence="1">
    <location>
        <begin position="49"/>
        <end position="52"/>
    </location>
    <ligand>
        <name>substrate</name>
    </ligand>
</feature>
<feature type="binding site" evidence="1">
    <location>
        <position position="109"/>
    </location>
    <ligand>
        <name>substrate</name>
    </ligand>
</feature>
<feature type="binding site" evidence="1">
    <location>
        <begin position="114"/>
        <end position="116"/>
    </location>
    <ligand>
        <name>substrate</name>
    </ligand>
</feature>
<feature type="binding site" evidence="1">
    <location>
        <position position="120"/>
    </location>
    <ligand>
        <name>substrate</name>
    </ligand>
</feature>
<feature type="binding site" evidence="1">
    <location>
        <begin position="189"/>
        <end position="194"/>
    </location>
    <ligand>
        <name>NADP(+)</name>
        <dbReference type="ChEBI" id="CHEBI:58349"/>
    </ligand>
</feature>
<feature type="site" description="Important for activity" evidence="1">
    <location>
        <position position="99"/>
    </location>
</feature>
<name>HEM1_STAAC</name>
<reference key="1">
    <citation type="journal article" date="2005" name="J. Bacteriol.">
        <title>Insights on evolution of virulence and resistance from the complete genome analysis of an early methicillin-resistant Staphylococcus aureus strain and a biofilm-producing methicillin-resistant Staphylococcus epidermidis strain.</title>
        <authorList>
            <person name="Gill S.R."/>
            <person name="Fouts D.E."/>
            <person name="Archer G.L."/>
            <person name="Mongodin E.F."/>
            <person name="DeBoy R.T."/>
            <person name="Ravel J."/>
            <person name="Paulsen I.T."/>
            <person name="Kolonay J.F."/>
            <person name="Brinkac L.M."/>
            <person name="Beanan M.J."/>
            <person name="Dodson R.J."/>
            <person name="Daugherty S.C."/>
            <person name="Madupu R."/>
            <person name="Angiuoli S.V."/>
            <person name="Durkin A.S."/>
            <person name="Haft D.H."/>
            <person name="Vamathevan J.J."/>
            <person name="Khouri H."/>
            <person name="Utterback T.R."/>
            <person name="Lee C."/>
            <person name="Dimitrov G."/>
            <person name="Jiang L."/>
            <person name="Qin H."/>
            <person name="Weidman J."/>
            <person name="Tran K."/>
            <person name="Kang K.H."/>
            <person name="Hance I.R."/>
            <person name="Nelson K.E."/>
            <person name="Fraser C.M."/>
        </authorList>
    </citation>
    <scope>NUCLEOTIDE SEQUENCE [LARGE SCALE GENOMIC DNA]</scope>
    <source>
        <strain>COL</strain>
    </source>
</reference>
<gene>
    <name evidence="1" type="primary">hemA</name>
    <name type="ordered locus">SACOL1719</name>
</gene>
<keyword id="KW-0521">NADP</keyword>
<keyword id="KW-0560">Oxidoreductase</keyword>
<keyword id="KW-0627">Porphyrin biosynthesis</keyword>
<evidence type="ECO:0000255" key="1">
    <source>
        <dbReference type="HAMAP-Rule" id="MF_00087"/>
    </source>
</evidence>